<dbReference type="EC" id="3.2.2.23"/>
<dbReference type="EC" id="4.2.99.18"/>
<dbReference type="EMBL" id="AE005176">
    <property type="protein sequence ID" value="AAK04451.1"/>
    <property type="molecule type" value="Genomic_DNA"/>
</dbReference>
<dbReference type="PIR" id="A86669">
    <property type="entry name" value="A86669"/>
</dbReference>
<dbReference type="RefSeq" id="NP_266509.1">
    <property type="nucleotide sequence ID" value="NC_002662.1"/>
</dbReference>
<dbReference type="RefSeq" id="WP_010905298.1">
    <property type="nucleotide sequence ID" value="NC_002662.1"/>
</dbReference>
<dbReference type="SMR" id="Q9CIK4"/>
<dbReference type="PaxDb" id="272623-L0271"/>
<dbReference type="EnsemblBacteria" id="AAK04451">
    <property type="protein sequence ID" value="AAK04451"/>
    <property type="gene ID" value="L0271"/>
</dbReference>
<dbReference type="KEGG" id="lla:L0271"/>
<dbReference type="PATRIC" id="fig|272623.7.peg.387"/>
<dbReference type="eggNOG" id="COG0266">
    <property type="taxonomic scope" value="Bacteria"/>
</dbReference>
<dbReference type="HOGENOM" id="CLU_038423_1_2_9"/>
<dbReference type="OrthoDB" id="9800855at2"/>
<dbReference type="Proteomes" id="UP000002196">
    <property type="component" value="Chromosome"/>
</dbReference>
<dbReference type="GO" id="GO:0034039">
    <property type="term" value="F:8-oxo-7,8-dihydroguanine DNA N-glycosylase activity"/>
    <property type="evidence" value="ECO:0007669"/>
    <property type="project" value="TreeGrafter"/>
</dbReference>
<dbReference type="GO" id="GO:0140078">
    <property type="term" value="F:class I DNA-(apurinic or apyrimidinic site) endonuclease activity"/>
    <property type="evidence" value="ECO:0007669"/>
    <property type="project" value="UniProtKB-EC"/>
</dbReference>
<dbReference type="GO" id="GO:0003684">
    <property type="term" value="F:damaged DNA binding"/>
    <property type="evidence" value="ECO:0007669"/>
    <property type="project" value="InterPro"/>
</dbReference>
<dbReference type="GO" id="GO:0008270">
    <property type="term" value="F:zinc ion binding"/>
    <property type="evidence" value="ECO:0007669"/>
    <property type="project" value="UniProtKB-UniRule"/>
</dbReference>
<dbReference type="GO" id="GO:0006284">
    <property type="term" value="P:base-excision repair"/>
    <property type="evidence" value="ECO:0007669"/>
    <property type="project" value="InterPro"/>
</dbReference>
<dbReference type="CDD" id="cd08966">
    <property type="entry name" value="EcFpg-like_N"/>
    <property type="match status" value="1"/>
</dbReference>
<dbReference type="FunFam" id="1.10.8.50:FF:000003">
    <property type="entry name" value="Formamidopyrimidine-DNA glycosylase"/>
    <property type="match status" value="1"/>
</dbReference>
<dbReference type="FunFam" id="3.20.190.10:FF:000001">
    <property type="entry name" value="Formamidopyrimidine-DNA glycosylase"/>
    <property type="match status" value="1"/>
</dbReference>
<dbReference type="Gene3D" id="1.10.8.50">
    <property type="match status" value="1"/>
</dbReference>
<dbReference type="Gene3D" id="3.20.190.10">
    <property type="entry name" value="MutM-like, N-terminal"/>
    <property type="match status" value="1"/>
</dbReference>
<dbReference type="HAMAP" id="MF_00103">
    <property type="entry name" value="Fapy_DNA_glycosyl"/>
    <property type="match status" value="1"/>
</dbReference>
<dbReference type="InterPro" id="IPR015886">
    <property type="entry name" value="DNA_glyclase/AP_lyase_DNA-bd"/>
</dbReference>
<dbReference type="InterPro" id="IPR015887">
    <property type="entry name" value="DNA_glyclase_Znf_dom_DNA_BS"/>
</dbReference>
<dbReference type="InterPro" id="IPR020629">
    <property type="entry name" value="Formamido-pyr_DNA_Glyclase"/>
</dbReference>
<dbReference type="InterPro" id="IPR012319">
    <property type="entry name" value="FPG_cat"/>
</dbReference>
<dbReference type="InterPro" id="IPR035937">
    <property type="entry name" value="MutM-like_N-ter"/>
</dbReference>
<dbReference type="InterPro" id="IPR010979">
    <property type="entry name" value="Ribosomal_uS13-like_H2TH"/>
</dbReference>
<dbReference type="InterPro" id="IPR000214">
    <property type="entry name" value="Znf_DNA_glyclase/AP_lyase"/>
</dbReference>
<dbReference type="InterPro" id="IPR010663">
    <property type="entry name" value="Znf_FPG/IleRS"/>
</dbReference>
<dbReference type="NCBIfam" id="TIGR00577">
    <property type="entry name" value="fpg"/>
    <property type="match status" value="1"/>
</dbReference>
<dbReference type="NCBIfam" id="NF002211">
    <property type="entry name" value="PRK01103.1"/>
    <property type="match status" value="1"/>
</dbReference>
<dbReference type="PANTHER" id="PTHR22993">
    <property type="entry name" value="FORMAMIDOPYRIMIDINE-DNA GLYCOSYLASE"/>
    <property type="match status" value="1"/>
</dbReference>
<dbReference type="PANTHER" id="PTHR22993:SF9">
    <property type="entry name" value="FORMAMIDOPYRIMIDINE-DNA GLYCOSYLASE"/>
    <property type="match status" value="1"/>
</dbReference>
<dbReference type="Pfam" id="PF01149">
    <property type="entry name" value="Fapy_DNA_glyco"/>
    <property type="match status" value="1"/>
</dbReference>
<dbReference type="Pfam" id="PF06831">
    <property type="entry name" value="H2TH"/>
    <property type="match status" value="1"/>
</dbReference>
<dbReference type="Pfam" id="PF06827">
    <property type="entry name" value="zf-FPG_IleRS"/>
    <property type="match status" value="1"/>
</dbReference>
<dbReference type="SMART" id="SM00898">
    <property type="entry name" value="Fapy_DNA_glyco"/>
    <property type="match status" value="1"/>
</dbReference>
<dbReference type="SMART" id="SM01232">
    <property type="entry name" value="H2TH"/>
    <property type="match status" value="1"/>
</dbReference>
<dbReference type="SUPFAM" id="SSF57716">
    <property type="entry name" value="Glucocorticoid receptor-like (DNA-binding domain)"/>
    <property type="match status" value="1"/>
</dbReference>
<dbReference type="SUPFAM" id="SSF81624">
    <property type="entry name" value="N-terminal domain of MutM-like DNA repair proteins"/>
    <property type="match status" value="1"/>
</dbReference>
<dbReference type="SUPFAM" id="SSF46946">
    <property type="entry name" value="S13-like H2TH domain"/>
    <property type="match status" value="1"/>
</dbReference>
<dbReference type="PROSITE" id="PS51068">
    <property type="entry name" value="FPG_CAT"/>
    <property type="match status" value="1"/>
</dbReference>
<dbReference type="PROSITE" id="PS01242">
    <property type="entry name" value="ZF_FPG_1"/>
    <property type="match status" value="1"/>
</dbReference>
<dbReference type="PROSITE" id="PS51066">
    <property type="entry name" value="ZF_FPG_2"/>
    <property type="match status" value="1"/>
</dbReference>
<accession>Q9CIK4</accession>
<evidence type="ECO:0000250" key="1"/>
<evidence type="ECO:0000305" key="2"/>
<sequence>MPELPEVETVRRELEKRIVGQKIVSIEATYPRMVLTGFEQLKKELTGKTIHGISRRGKYLIFEIGEKDRLISHLRMEGKYRLASLNVPMEKHDHLALKFTDEQLIYADVRKFGTWELISTDQVLPYFLKKNIGPEPTYETFDEQIFREKLQKSTKKIKPFLLEQTLVAGLGNIYVDEVLWLAKIHPEKVANQLTESSIHLLHDSIIEILQKAIKLGGSSIRTYSALGSTGKMQDELRVYGKTGEKCVRCGNEIQKIKVAGRGTHFCPFCQQK</sequence>
<keyword id="KW-0227">DNA damage</keyword>
<keyword id="KW-0234">DNA repair</keyword>
<keyword id="KW-0238">DNA-binding</keyword>
<keyword id="KW-0326">Glycosidase</keyword>
<keyword id="KW-0378">Hydrolase</keyword>
<keyword id="KW-0456">Lyase</keyword>
<keyword id="KW-0479">Metal-binding</keyword>
<keyword id="KW-0511">Multifunctional enzyme</keyword>
<keyword id="KW-1185">Reference proteome</keyword>
<keyword id="KW-0862">Zinc</keyword>
<keyword id="KW-0863">Zinc-finger</keyword>
<gene>
    <name type="primary">mutM</name>
    <name type="synonym">fpg</name>
    <name type="ordered locus">LL0353</name>
    <name type="ORF">L0271</name>
</gene>
<name>FPG_LACLA</name>
<feature type="initiator methionine" description="Removed" evidence="1">
    <location>
        <position position="1"/>
    </location>
</feature>
<feature type="chain" id="PRO_0000170829" description="Formamidopyrimidine-DNA glycosylase">
    <location>
        <begin position="2"/>
        <end position="272"/>
    </location>
</feature>
<feature type="zinc finger region" description="FPG-type">
    <location>
        <begin position="237"/>
        <end position="271"/>
    </location>
</feature>
<feature type="active site" description="Schiff-base intermediate with DNA" evidence="1">
    <location>
        <position position="2"/>
    </location>
</feature>
<feature type="active site" description="Proton donor" evidence="1">
    <location>
        <position position="3"/>
    </location>
</feature>
<feature type="active site" description="Proton donor; for beta-elimination activity" evidence="1">
    <location>
        <position position="58"/>
    </location>
</feature>
<feature type="active site" description="Proton donor; for delta-elimination activity" evidence="1">
    <location>
        <position position="261"/>
    </location>
</feature>
<feature type="binding site" evidence="1">
    <location>
        <position position="92"/>
    </location>
    <ligand>
        <name>DNA</name>
        <dbReference type="ChEBI" id="CHEBI:16991"/>
    </ligand>
</feature>
<feature type="binding site" evidence="1">
    <location>
        <position position="110"/>
    </location>
    <ligand>
        <name>DNA</name>
        <dbReference type="ChEBI" id="CHEBI:16991"/>
    </ligand>
</feature>
<comment type="function">
    <text evidence="1">Involved in base excision repair of DNA damaged by oxidation or by mutagenic agents. Acts as a DNA glycosylase that recognizes and removes damaged bases. Has a preference for oxidized purines, such as 7,8-dihydro-8-oxoguanine (8-oxoG). Has AP (apurinic/apyrimidinic) lyase activity and introduces nicks in the DNA strand. Cleaves the DNA backbone by beta-delta elimination to generate a single-strand break at the site of the removed base with both 3'- and 5'-phosphates (By similarity).</text>
</comment>
<comment type="catalytic activity">
    <reaction>
        <text>Hydrolysis of DNA containing ring-opened 7-methylguanine residues, releasing 2,6-diamino-4-hydroxy-5-(N-methyl)formamidopyrimidine.</text>
        <dbReference type="EC" id="3.2.2.23"/>
    </reaction>
</comment>
<comment type="catalytic activity">
    <reaction>
        <text>2'-deoxyribonucleotide-(2'-deoxyribose 5'-phosphate)-2'-deoxyribonucleotide-DNA = a 3'-end 2'-deoxyribonucleotide-(2,3-dehydro-2,3-deoxyribose 5'-phosphate)-DNA + a 5'-end 5'-phospho-2'-deoxyribonucleoside-DNA + H(+)</text>
        <dbReference type="Rhea" id="RHEA:66592"/>
        <dbReference type="Rhea" id="RHEA-COMP:13180"/>
        <dbReference type="Rhea" id="RHEA-COMP:16897"/>
        <dbReference type="Rhea" id="RHEA-COMP:17067"/>
        <dbReference type="ChEBI" id="CHEBI:15378"/>
        <dbReference type="ChEBI" id="CHEBI:136412"/>
        <dbReference type="ChEBI" id="CHEBI:157695"/>
        <dbReference type="ChEBI" id="CHEBI:167181"/>
        <dbReference type="EC" id="4.2.99.18"/>
    </reaction>
</comment>
<comment type="cofactor">
    <cofactor evidence="1">
        <name>Zn(2+)</name>
        <dbReference type="ChEBI" id="CHEBI:29105"/>
    </cofactor>
    <text evidence="1">Binds 1 zinc ion per subunit.</text>
</comment>
<comment type="subunit">
    <text evidence="1">Monomer.</text>
</comment>
<comment type="similarity">
    <text evidence="2">Belongs to the FPG family.</text>
</comment>
<reference key="1">
    <citation type="journal article" date="2001" name="Genome Res.">
        <title>The complete genome sequence of the lactic acid bacterium Lactococcus lactis ssp. lactis IL1403.</title>
        <authorList>
            <person name="Bolotin A."/>
            <person name="Wincker P."/>
            <person name="Mauger S."/>
            <person name="Jaillon O."/>
            <person name="Malarme K."/>
            <person name="Weissenbach J."/>
            <person name="Ehrlich S.D."/>
            <person name="Sorokin A."/>
        </authorList>
    </citation>
    <scope>NUCLEOTIDE SEQUENCE [LARGE SCALE GENOMIC DNA]</scope>
    <source>
        <strain>IL1403</strain>
    </source>
</reference>
<proteinExistence type="inferred from homology"/>
<protein>
    <recommendedName>
        <fullName>Formamidopyrimidine-DNA glycosylase</fullName>
        <shortName>Fapy-DNA glycosylase</shortName>
        <ecNumber>3.2.2.23</ecNumber>
    </recommendedName>
    <alternativeName>
        <fullName>DNA-(apurinic or apyrimidinic site) lyase MutM</fullName>
        <shortName>AP lyase MutM</shortName>
        <ecNumber>4.2.99.18</ecNumber>
    </alternativeName>
</protein>
<organism>
    <name type="scientific">Lactococcus lactis subsp. lactis (strain IL1403)</name>
    <name type="common">Streptococcus lactis</name>
    <dbReference type="NCBI Taxonomy" id="272623"/>
    <lineage>
        <taxon>Bacteria</taxon>
        <taxon>Bacillati</taxon>
        <taxon>Bacillota</taxon>
        <taxon>Bacilli</taxon>
        <taxon>Lactobacillales</taxon>
        <taxon>Streptococcaceae</taxon>
        <taxon>Lactococcus</taxon>
    </lineage>
</organism>